<proteinExistence type="evidence at transcript level"/>
<protein>
    <recommendedName>
        <fullName evidence="9">9-cis-epoxycarotenoid dioxygenase NCED4, chloroplastic</fullName>
        <shortName evidence="10">OsNCED4</shortName>
        <ecNumber evidence="1">1.13.11.51</ecNumber>
    </recommendedName>
</protein>
<accession>Q69NX5</accession>
<accession>Q0D8J6</accession>
<gene>
    <name evidence="10" type="primary">NCED4</name>
    <name evidence="12" type="ordered locus">Os07g0154100</name>
    <name evidence="9" type="ordered locus">LOC_Os07g05940</name>
    <name evidence="13" type="ORF">OsJ_23132</name>
    <name evidence="11" type="ORF">OSJNBb0050B07.21</name>
</gene>
<dbReference type="EC" id="1.13.11.51" evidence="1"/>
<dbReference type="EMBL" id="AY838900">
    <property type="protein sequence ID" value="AAW21320.1"/>
    <property type="molecule type" value="mRNA"/>
</dbReference>
<dbReference type="EMBL" id="AP005632">
    <property type="protein sequence ID" value="BAD31592.1"/>
    <property type="molecule type" value="Genomic_DNA"/>
</dbReference>
<dbReference type="EMBL" id="AP008213">
    <property type="protein sequence ID" value="BAF20827.1"/>
    <property type="status" value="ALT_INIT"/>
    <property type="molecule type" value="Genomic_DNA"/>
</dbReference>
<dbReference type="EMBL" id="AP014963">
    <property type="protein sequence ID" value="BAT00112.1"/>
    <property type="molecule type" value="Genomic_DNA"/>
</dbReference>
<dbReference type="EMBL" id="CM000144">
    <property type="protein sequence ID" value="EAZ38731.1"/>
    <property type="molecule type" value="Genomic_DNA"/>
</dbReference>
<dbReference type="EMBL" id="AK119780">
    <property type="protein sequence ID" value="BAG99785.1"/>
    <property type="molecule type" value="mRNA"/>
</dbReference>
<dbReference type="RefSeq" id="XP_015645858.1">
    <property type="nucleotide sequence ID" value="XM_015790372.1"/>
</dbReference>
<dbReference type="SMR" id="Q69NX5"/>
<dbReference type="FunCoup" id="Q69NX5">
    <property type="interactions" value="5"/>
</dbReference>
<dbReference type="STRING" id="39947.Q69NX5"/>
<dbReference type="PaxDb" id="39947-Q69NX5"/>
<dbReference type="EnsemblPlants" id="Os07t0154100-01">
    <property type="protein sequence ID" value="Os07t0154100-01"/>
    <property type="gene ID" value="Os07g0154100"/>
</dbReference>
<dbReference type="GeneID" id="4342424"/>
<dbReference type="Gramene" id="Os07t0154100-01">
    <property type="protein sequence ID" value="Os07t0154100-01"/>
    <property type="gene ID" value="Os07g0154100"/>
</dbReference>
<dbReference type="KEGG" id="dosa:Os07g0154100"/>
<dbReference type="KEGG" id="osa:4342424"/>
<dbReference type="eggNOG" id="KOG1285">
    <property type="taxonomic scope" value="Eukaryota"/>
</dbReference>
<dbReference type="HOGENOM" id="CLU_016472_0_0_1"/>
<dbReference type="InParanoid" id="Q69NX5"/>
<dbReference type="OMA" id="YAIVPDQ"/>
<dbReference type="PlantReactome" id="R-OSA-1119374">
    <property type="pathway name" value="Abscisic acid biosynthesis"/>
</dbReference>
<dbReference type="Proteomes" id="UP000000763">
    <property type="component" value="Chromosome 7"/>
</dbReference>
<dbReference type="Proteomes" id="UP000007752">
    <property type="component" value="Chromosome 7"/>
</dbReference>
<dbReference type="Proteomes" id="UP000059680">
    <property type="component" value="Chromosome 7"/>
</dbReference>
<dbReference type="GO" id="GO:0009570">
    <property type="term" value="C:chloroplast stroma"/>
    <property type="evidence" value="ECO:0000318"/>
    <property type="project" value="GO_Central"/>
</dbReference>
<dbReference type="GO" id="GO:0045549">
    <property type="term" value="F:9-cis-epoxycarotenoid dioxygenase activity"/>
    <property type="evidence" value="ECO:0007669"/>
    <property type="project" value="UniProtKB-EC"/>
</dbReference>
<dbReference type="GO" id="GO:0010436">
    <property type="term" value="F:carotenoid dioxygenase activity"/>
    <property type="evidence" value="ECO:0000318"/>
    <property type="project" value="GO_Central"/>
</dbReference>
<dbReference type="GO" id="GO:0046872">
    <property type="term" value="F:metal ion binding"/>
    <property type="evidence" value="ECO:0007669"/>
    <property type="project" value="UniProtKB-KW"/>
</dbReference>
<dbReference type="GO" id="GO:0009688">
    <property type="term" value="P:abscisic acid biosynthetic process"/>
    <property type="evidence" value="ECO:0007669"/>
    <property type="project" value="UniProtKB-KW"/>
</dbReference>
<dbReference type="GO" id="GO:0016121">
    <property type="term" value="P:carotene catabolic process"/>
    <property type="evidence" value="ECO:0000318"/>
    <property type="project" value="GO_Central"/>
</dbReference>
<dbReference type="InterPro" id="IPR004294">
    <property type="entry name" value="Carotenoid_Oase"/>
</dbReference>
<dbReference type="PANTHER" id="PTHR10543:SF97">
    <property type="entry name" value="9-CIS-EPOXYCAROTENOID DIOXYGENASE NCED4, CHLOROPLASTIC"/>
    <property type="match status" value="1"/>
</dbReference>
<dbReference type="PANTHER" id="PTHR10543">
    <property type="entry name" value="BETA-CAROTENE DIOXYGENASE"/>
    <property type="match status" value="1"/>
</dbReference>
<dbReference type="Pfam" id="PF03055">
    <property type="entry name" value="RPE65"/>
    <property type="match status" value="1"/>
</dbReference>
<feature type="transit peptide" description="Chloroplast" evidence="2">
    <location>
        <begin position="1"/>
        <end position="64"/>
    </location>
</feature>
<feature type="chain" id="PRO_0000440940" description="9-cis-epoxycarotenoid dioxygenase NCED4, chloroplastic" evidence="2">
    <location>
        <begin position="65"/>
        <end position="582"/>
    </location>
</feature>
<feature type="region of interest" description="Disordered" evidence="3">
    <location>
        <begin position="1"/>
        <end position="53"/>
    </location>
</feature>
<feature type="compositionally biased region" description="Low complexity" evidence="3">
    <location>
        <begin position="1"/>
        <end position="14"/>
    </location>
</feature>
<feature type="binding site" evidence="1">
    <location>
        <position position="273"/>
    </location>
    <ligand>
        <name>Fe cation</name>
        <dbReference type="ChEBI" id="CHEBI:24875"/>
    </ligand>
</feature>
<feature type="binding site" evidence="1">
    <location>
        <position position="322"/>
    </location>
    <ligand>
        <name>Fe cation</name>
        <dbReference type="ChEBI" id="CHEBI:24875"/>
    </ligand>
</feature>
<feature type="binding site" evidence="1">
    <location>
        <position position="387"/>
    </location>
    <ligand>
        <name>Fe cation</name>
        <dbReference type="ChEBI" id="CHEBI:24875"/>
    </ligand>
</feature>
<feature type="binding site" evidence="1">
    <location>
        <position position="569"/>
    </location>
    <ligand>
        <name>Fe cation</name>
        <dbReference type="ChEBI" id="CHEBI:24875"/>
    </ligand>
</feature>
<sequence length="582" mass="62948">MASSAPSAPGLAPVAKPPPPPSKVKVATATVPTNGKIKQGARPMRVSAPPVEPRRRMNPLQRLAAAAIDAVEEGLVAGLLERGHALPRTADPAVQIAGNYAPVGERPPVRGLPVSGRLPACLDGVYVRNGANPLHAPRAGHHLFDGDGMLHAVRLAGGRAESYACRFTETARLRQEREMGRPVFPKAIGELHGHSGVARLLLFGSRALCGVLDASRGIGVANAGLVYHDGRLLAMSEDDLPYHVRVTHDGDLETVGRYDFHGQLDADGTMIAHPKLDPVTGELFALSYNVVSKPYLKYFYFTADGRKSRDVDIPVGAPTMIHDFAVTENYAVVPDQQIVFKLQEMVRGGSPVVYDREKASRFGVLPKRAADASELRWVEVPGCFCFHLWNAWEDDATGEIVVIGSCMTPPDAVFNEPSQSPEEESFRSVLSEIRLDPRTGVSRRRDVLRDAAEQVNLEAGMVNRQLLGRKTRYAYLAIAEPWPRVSGFAKVDLESGTAEKFIYGEGRYGGEPCFVPRAGAAAEDDGHVLCFVHDEERGTSELVVVDAGSEAMEEVAAVKLPGRVPYGLHGTFIGANELQRQA</sequence>
<reference key="1">
    <citation type="submission" date="2004-11" db="EMBL/GenBank/DDBJ databases">
        <title>Oryza sativa japonica group 9-cis-epoxycarotenoid dioxygenase 4 (NCED4) mRNA.</title>
        <authorList>
            <person name="Dian W.M."/>
        </authorList>
    </citation>
    <scope>NUCLEOTIDE SEQUENCE [MRNA]</scope>
</reference>
<reference key="2">
    <citation type="journal article" date="2005" name="Nature">
        <title>The map-based sequence of the rice genome.</title>
        <authorList>
            <consortium name="International rice genome sequencing project (IRGSP)"/>
        </authorList>
    </citation>
    <scope>NUCLEOTIDE SEQUENCE [LARGE SCALE GENOMIC DNA]</scope>
    <source>
        <strain>cv. Nipponbare</strain>
    </source>
</reference>
<reference key="3">
    <citation type="journal article" date="2008" name="Nucleic Acids Res.">
        <title>The rice annotation project database (RAP-DB): 2008 update.</title>
        <authorList>
            <consortium name="The rice annotation project (RAP)"/>
        </authorList>
    </citation>
    <scope>GENOME REANNOTATION</scope>
    <source>
        <strain>cv. Nipponbare</strain>
    </source>
</reference>
<reference key="4">
    <citation type="journal article" date="2013" name="Rice">
        <title>Improvement of the Oryza sativa Nipponbare reference genome using next generation sequence and optical map data.</title>
        <authorList>
            <person name="Kawahara Y."/>
            <person name="de la Bastide M."/>
            <person name="Hamilton J.P."/>
            <person name="Kanamori H."/>
            <person name="McCombie W.R."/>
            <person name="Ouyang S."/>
            <person name="Schwartz D.C."/>
            <person name="Tanaka T."/>
            <person name="Wu J."/>
            <person name="Zhou S."/>
            <person name="Childs K.L."/>
            <person name="Davidson R.M."/>
            <person name="Lin H."/>
            <person name="Quesada-Ocampo L."/>
            <person name="Vaillancourt B."/>
            <person name="Sakai H."/>
            <person name="Lee S.S."/>
            <person name="Kim J."/>
            <person name="Numa H."/>
            <person name="Itoh T."/>
            <person name="Buell C.R."/>
            <person name="Matsumoto T."/>
        </authorList>
    </citation>
    <scope>GENOME REANNOTATION</scope>
    <source>
        <strain>cv. Nipponbare</strain>
    </source>
</reference>
<reference key="5">
    <citation type="journal article" date="2005" name="PLoS Biol.">
        <title>The genomes of Oryza sativa: a history of duplications.</title>
        <authorList>
            <person name="Yu J."/>
            <person name="Wang J."/>
            <person name="Lin W."/>
            <person name="Li S."/>
            <person name="Li H."/>
            <person name="Zhou J."/>
            <person name="Ni P."/>
            <person name="Dong W."/>
            <person name="Hu S."/>
            <person name="Zeng C."/>
            <person name="Zhang J."/>
            <person name="Zhang Y."/>
            <person name="Li R."/>
            <person name="Xu Z."/>
            <person name="Li S."/>
            <person name="Li X."/>
            <person name="Zheng H."/>
            <person name="Cong L."/>
            <person name="Lin L."/>
            <person name="Yin J."/>
            <person name="Geng J."/>
            <person name="Li G."/>
            <person name="Shi J."/>
            <person name="Liu J."/>
            <person name="Lv H."/>
            <person name="Li J."/>
            <person name="Wang J."/>
            <person name="Deng Y."/>
            <person name="Ran L."/>
            <person name="Shi X."/>
            <person name="Wang X."/>
            <person name="Wu Q."/>
            <person name="Li C."/>
            <person name="Ren X."/>
            <person name="Wang J."/>
            <person name="Wang X."/>
            <person name="Li D."/>
            <person name="Liu D."/>
            <person name="Zhang X."/>
            <person name="Ji Z."/>
            <person name="Zhao W."/>
            <person name="Sun Y."/>
            <person name="Zhang Z."/>
            <person name="Bao J."/>
            <person name="Han Y."/>
            <person name="Dong L."/>
            <person name="Ji J."/>
            <person name="Chen P."/>
            <person name="Wu S."/>
            <person name="Liu J."/>
            <person name="Xiao Y."/>
            <person name="Bu D."/>
            <person name="Tan J."/>
            <person name="Yang L."/>
            <person name="Ye C."/>
            <person name="Zhang J."/>
            <person name="Xu J."/>
            <person name="Zhou Y."/>
            <person name="Yu Y."/>
            <person name="Zhang B."/>
            <person name="Zhuang S."/>
            <person name="Wei H."/>
            <person name="Liu B."/>
            <person name="Lei M."/>
            <person name="Yu H."/>
            <person name="Li Y."/>
            <person name="Xu H."/>
            <person name="Wei S."/>
            <person name="He X."/>
            <person name="Fang L."/>
            <person name="Zhang Z."/>
            <person name="Zhang Y."/>
            <person name="Huang X."/>
            <person name="Su Z."/>
            <person name="Tong W."/>
            <person name="Li J."/>
            <person name="Tong Z."/>
            <person name="Li S."/>
            <person name="Ye J."/>
            <person name="Wang L."/>
            <person name="Fang L."/>
            <person name="Lei T."/>
            <person name="Chen C.-S."/>
            <person name="Chen H.-C."/>
            <person name="Xu Z."/>
            <person name="Li H."/>
            <person name="Huang H."/>
            <person name="Zhang F."/>
            <person name="Xu H."/>
            <person name="Li N."/>
            <person name="Zhao C."/>
            <person name="Li S."/>
            <person name="Dong L."/>
            <person name="Huang Y."/>
            <person name="Li L."/>
            <person name="Xi Y."/>
            <person name="Qi Q."/>
            <person name="Li W."/>
            <person name="Zhang B."/>
            <person name="Hu W."/>
            <person name="Zhang Y."/>
            <person name="Tian X."/>
            <person name="Jiao Y."/>
            <person name="Liang X."/>
            <person name="Jin J."/>
            <person name="Gao L."/>
            <person name="Zheng W."/>
            <person name="Hao B."/>
            <person name="Liu S.-M."/>
            <person name="Wang W."/>
            <person name="Yuan L."/>
            <person name="Cao M."/>
            <person name="McDermott J."/>
            <person name="Samudrala R."/>
            <person name="Wang J."/>
            <person name="Wong G.K.-S."/>
            <person name="Yang H."/>
        </authorList>
    </citation>
    <scope>NUCLEOTIDE SEQUENCE [LARGE SCALE GENOMIC DNA]</scope>
    <source>
        <strain>cv. Nipponbare</strain>
    </source>
</reference>
<reference key="6">
    <citation type="journal article" date="2003" name="Science">
        <title>Collection, mapping, and annotation of over 28,000 cDNA clones from japonica rice.</title>
        <authorList>
            <consortium name="The rice full-length cDNA consortium"/>
        </authorList>
    </citation>
    <scope>NUCLEOTIDE SEQUENCE [LARGE SCALE MRNA]</scope>
    <source>
        <strain>cv. Nipponbare</strain>
    </source>
</reference>
<reference key="7">
    <citation type="journal article" date="2008" name="Plant Physiol.">
        <title>A third phytoene synthase is devoted to abiotic stress-induced abscisic acid formation in rice and defines functional diversification of phytoene synthase genes.</title>
        <authorList>
            <person name="Welsch R."/>
            <person name="Wuest F."/>
            <person name="Baer C."/>
            <person name="Al-Babili S."/>
            <person name="Beyer P."/>
        </authorList>
    </citation>
    <scope>INDUCTION</scope>
</reference>
<reference key="8">
    <citation type="journal article" date="2013" name="Planta">
        <title>Phosphorylation of D-allose by hexokinase involved in regulation of OsABF1 expression for growth inhibition in Oryza sativa L.</title>
        <authorList>
            <person name="Fukumoto T."/>
            <person name="Kano A."/>
            <person name="Ohtani K."/>
            <person name="Inoue M."/>
            <person name="Yoshihara A."/>
            <person name="Izumori K."/>
            <person name="Tajima S."/>
            <person name="Shigematsu Y."/>
            <person name="Tanaka K."/>
            <person name="Ohkouchi T."/>
            <person name="Ishida Y."/>
            <person name="Nishizawa Y."/>
            <person name="Tada Y."/>
            <person name="Ichimura K."/>
            <person name="Gomi K."/>
            <person name="Yoo S.D."/>
            <person name="Sheen J."/>
            <person name="Akimitsu K."/>
        </authorList>
    </citation>
    <scope>INDUCTION BY D-ALLOSE</scope>
</reference>
<reference key="9">
    <citation type="journal article" date="2013" name="PLoS ONE">
        <title>Abscisic acid promotes susceptibility to the rice leaf blight pathogen Xanthomonas oryzae pv oryzae by suppressing salicylic acid-mediated defenses.</title>
        <authorList>
            <person name="Xu J."/>
            <person name="Audenaert K."/>
            <person name="Hofte M."/>
            <person name="De Vleesschauwer D."/>
        </authorList>
    </citation>
    <scope>INDUCTION BY INFECTION WITH XOO</scope>
</reference>
<reference key="10">
    <citation type="journal article" date="2015" name="J. Integr. Plant Biol.">
        <title>GID1 modulates stomatal response and submergence tolerance involving abscisic acid and gibberellic acid signaling in rice.</title>
        <authorList>
            <person name="Du H."/>
            <person name="Chang Y."/>
            <person name="Huang F."/>
            <person name="Xiong L."/>
        </authorList>
    </citation>
    <scope>INDUCTION BY DROUGHT STRESS</scope>
</reference>
<reference key="11">
    <citation type="journal article" date="2015" name="Plant Cell Physiol.">
        <title>Reduced ABA accumulation in the root system is caused by ABA exudation in upland rice (Oryza sativa L. var. Gaoshan1) and this enhanced drought adaptation.</title>
        <authorList>
            <person name="Shi L."/>
            <person name="Guo M."/>
            <person name="Ye N."/>
            <person name="Liu Y."/>
            <person name="Liu R."/>
            <person name="Xia Y."/>
            <person name="Cui S."/>
            <person name="Zhang J."/>
        </authorList>
    </citation>
    <scope>INDUCTION BY DROUGHT STRESS</scope>
</reference>
<organism>
    <name type="scientific">Oryza sativa subsp. japonica</name>
    <name type="common">Rice</name>
    <dbReference type="NCBI Taxonomy" id="39947"/>
    <lineage>
        <taxon>Eukaryota</taxon>
        <taxon>Viridiplantae</taxon>
        <taxon>Streptophyta</taxon>
        <taxon>Embryophyta</taxon>
        <taxon>Tracheophyta</taxon>
        <taxon>Spermatophyta</taxon>
        <taxon>Magnoliopsida</taxon>
        <taxon>Liliopsida</taxon>
        <taxon>Poales</taxon>
        <taxon>Poaceae</taxon>
        <taxon>BOP clade</taxon>
        <taxon>Oryzoideae</taxon>
        <taxon>Oryzeae</taxon>
        <taxon>Oryzinae</taxon>
        <taxon>Oryza</taxon>
        <taxon>Oryza sativa</taxon>
    </lineage>
</organism>
<comment type="function">
    <text evidence="1">Has a 11,12(11',12') 9-cis epoxycarotenoid cleavage activity. Catalyzes the first step of abscisic-acid biosynthesis from carotenoids.</text>
</comment>
<comment type="catalytic activity">
    <reaction evidence="1">
        <text>a 9-cis-epoxycarotenoid + O2 = a 12'-apo-carotenal + 2-cis,4-trans-xanthoxin</text>
        <dbReference type="Rhea" id="RHEA:23328"/>
        <dbReference type="ChEBI" id="CHEBI:15379"/>
        <dbReference type="ChEBI" id="CHEBI:32304"/>
        <dbReference type="ChEBI" id="CHEBI:51972"/>
        <dbReference type="ChEBI" id="CHEBI:51973"/>
        <dbReference type="EC" id="1.13.11.51"/>
    </reaction>
</comment>
<comment type="catalytic activity">
    <reaction evidence="1">
        <text>9-cis-violaxanthin + O2 = (3S,5R,6S)-5,6-epoxy-3-hydroxy-5,6-dihydro-12'-apo-beta-caroten-12'-al + 2-cis,4-trans-xanthoxin</text>
        <dbReference type="Rhea" id="RHEA:16541"/>
        <dbReference type="ChEBI" id="CHEBI:15379"/>
        <dbReference type="ChEBI" id="CHEBI:32304"/>
        <dbReference type="ChEBI" id="CHEBI:34597"/>
        <dbReference type="ChEBI" id="CHEBI:35305"/>
        <dbReference type="EC" id="1.13.11.51"/>
    </reaction>
</comment>
<comment type="catalytic activity">
    <reaction evidence="1">
        <text>9'-cis-neoxanthin + O2 = (3S,5R,6R)-3,5-dihydroxy-6,7-didehydro-5,6-dihydro-12'-apo-beta-caroten-12'-al + 2-cis,4-trans-xanthoxin</text>
        <dbReference type="Rhea" id="RHEA:19677"/>
        <dbReference type="ChEBI" id="CHEBI:15379"/>
        <dbReference type="ChEBI" id="CHEBI:32304"/>
        <dbReference type="ChEBI" id="CHEBI:34596"/>
        <dbReference type="ChEBI" id="CHEBI:35306"/>
        <dbReference type="EC" id="1.13.11.51"/>
    </reaction>
</comment>
<comment type="cofactor">
    <cofactor evidence="1">
        <name>Fe(2+)</name>
        <dbReference type="ChEBI" id="CHEBI:29033"/>
    </cofactor>
    <text evidence="1">Binds 1 Fe(2+) ion per subunit.</text>
</comment>
<comment type="subcellular location">
    <subcellularLocation>
        <location evidence="2">Plastid</location>
        <location evidence="2">Chloroplast</location>
    </subcellularLocation>
</comment>
<comment type="induction">
    <text evidence="4 5 6 7 8">Induced by abscisic acid (ABA) and salt (PubMed:18326788). Induced by D-allose (PubMed:23397192). Induced by infection with the bacterial pathogen Xanthomonas oryzae pv. oryzae (Xoo) (PubMed:23826294). Induced by drought stress (PubMed:25418692, PubMed:25735958).</text>
</comment>
<comment type="similarity">
    <text evidence="9">Belongs to the carotenoid oxygenase family.</text>
</comment>
<comment type="sequence caution" evidence="9">
    <conflict type="erroneous initiation">
        <sequence resource="EMBL-CDS" id="BAF20827"/>
    </conflict>
    <text>Extended N-terminus.</text>
</comment>
<name>NCED4_ORYSJ</name>
<keyword id="KW-0937">Abscisic acid biosynthesis</keyword>
<keyword id="KW-0150">Chloroplast</keyword>
<keyword id="KW-0223">Dioxygenase</keyword>
<keyword id="KW-0408">Iron</keyword>
<keyword id="KW-0479">Metal-binding</keyword>
<keyword id="KW-0560">Oxidoreductase</keyword>
<keyword id="KW-0934">Plastid</keyword>
<keyword id="KW-1185">Reference proteome</keyword>
<keyword id="KW-0346">Stress response</keyword>
<keyword id="KW-0809">Transit peptide</keyword>
<evidence type="ECO:0000250" key="1">
    <source>
        <dbReference type="UniProtKB" id="O24592"/>
    </source>
</evidence>
<evidence type="ECO:0000255" key="2"/>
<evidence type="ECO:0000256" key="3">
    <source>
        <dbReference type="SAM" id="MobiDB-lite"/>
    </source>
</evidence>
<evidence type="ECO:0000269" key="4">
    <source>
    </source>
</evidence>
<evidence type="ECO:0000269" key="5">
    <source>
    </source>
</evidence>
<evidence type="ECO:0000269" key="6">
    <source>
    </source>
</evidence>
<evidence type="ECO:0000269" key="7">
    <source>
    </source>
</evidence>
<evidence type="ECO:0000269" key="8">
    <source>
    </source>
</evidence>
<evidence type="ECO:0000305" key="9"/>
<evidence type="ECO:0000312" key="10">
    <source>
        <dbReference type="EMBL" id="AAW21320.1"/>
    </source>
</evidence>
<evidence type="ECO:0000312" key="11">
    <source>
        <dbReference type="EMBL" id="BAD31592.1"/>
    </source>
</evidence>
<evidence type="ECO:0000312" key="12">
    <source>
        <dbReference type="EMBL" id="BAT00112.1"/>
    </source>
</evidence>
<evidence type="ECO:0000312" key="13">
    <source>
        <dbReference type="EMBL" id="EAZ38731.1"/>
    </source>
</evidence>